<proteinExistence type="inferred from homology"/>
<evidence type="ECO:0000250" key="1"/>
<evidence type="ECO:0000255" key="2"/>
<evidence type="ECO:0000305" key="3"/>
<accession>P57347</accession>
<organism>
    <name type="scientific">Buchnera aphidicola subsp. Acyrthosiphon pisum (strain APS)</name>
    <name type="common">Acyrthosiphon pisum symbiotic bacterium</name>
    <dbReference type="NCBI Taxonomy" id="107806"/>
    <lineage>
        <taxon>Bacteria</taxon>
        <taxon>Pseudomonadati</taxon>
        <taxon>Pseudomonadota</taxon>
        <taxon>Gammaproteobacteria</taxon>
        <taxon>Enterobacterales</taxon>
        <taxon>Erwiniaceae</taxon>
        <taxon>Buchnera</taxon>
    </lineage>
</organism>
<sequence length="314" mass="37023">MANILTIFLLISTLVTGIFWSFYCIKSFKNYLINKKIINNNNFHQEKIEKSKNKTYFLKSLASFFPIFLAIFIIRSFIYEPFQIPSGSMMPTLLVGDFILVEKFSYGIKEPITHKILIRTKKPNRGDIAVFQHPTDHNINYIKRIIGLPGDKIRYDLHDKHIHICTNYSDQRGCEKKISINYSQSRSSNFIQKIYFSNKNNIKEDKNIYNSLYFDIVEEIIEDVKHSILLLNSIKNTKENYFQQKNMPKLTWIVPKGEYFMMGDNRDNSLDSRYWGFVPEKNLVGKAIKIWMSFDKNENEWPTGIRINRIGSIH</sequence>
<feature type="chain" id="PRO_0000109503" description="Signal peptidase I">
    <location>
        <begin position="1"/>
        <end position="314"/>
    </location>
</feature>
<feature type="transmembrane region" description="Helical" evidence="2">
    <location>
        <begin position="5"/>
        <end position="25"/>
    </location>
</feature>
<feature type="topological domain" description="Cytoplasmic" evidence="2">
    <location>
        <begin position="26"/>
        <end position="63"/>
    </location>
</feature>
<feature type="transmembrane region" description="Helical" evidence="2">
    <location>
        <begin position="64"/>
        <end position="84"/>
    </location>
</feature>
<feature type="topological domain" description="Extracellular" evidence="2">
    <location>
        <begin position="85"/>
        <end position="314"/>
    </location>
</feature>
<feature type="active site" evidence="1">
    <location>
        <position position="88"/>
    </location>
</feature>
<feature type="active site" evidence="1">
    <location>
        <position position="143"/>
    </location>
</feature>
<dbReference type="EC" id="3.4.21.89"/>
<dbReference type="EMBL" id="BA000003">
    <property type="protein sequence ID" value="BAB12969.1"/>
    <property type="molecule type" value="Genomic_DNA"/>
</dbReference>
<dbReference type="RefSeq" id="NP_240083.1">
    <property type="nucleotide sequence ID" value="NC_002528.1"/>
</dbReference>
<dbReference type="RefSeq" id="WP_009874213.1">
    <property type="nucleotide sequence ID" value="NZ_AP036055.1"/>
</dbReference>
<dbReference type="SMR" id="P57347"/>
<dbReference type="STRING" id="563178.BUAP5A_254"/>
<dbReference type="MEROPS" id="S26.001"/>
<dbReference type="EnsemblBacteria" id="BAB12969">
    <property type="protein sequence ID" value="BAB12969"/>
    <property type="gene ID" value="BAB12969"/>
</dbReference>
<dbReference type="KEGG" id="buc:BU259"/>
<dbReference type="PATRIC" id="fig|107806.10.peg.269"/>
<dbReference type="eggNOG" id="COG0681">
    <property type="taxonomic scope" value="Bacteria"/>
</dbReference>
<dbReference type="HOGENOM" id="CLU_028723_1_1_6"/>
<dbReference type="Proteomes" id="UP000001806">
    <property type="component" value="Chromosome"/>
</dbReference>
<dbReference type="GO" id="GO:0005886">
    <property type="term" value="C:plasma membrane"/>
    <property type="evidence" value="ECO:0007669"/>
    <property type="project" value="UniProtKB-SubCell"/>
</dbReference>
<dbReference type="GO" id="GO:0004252">
    <property type="term" value="F:serine-type endopeptidase activity"/>
    <property type="evidence" value="ECO:0007669"/>
    <property type="project" value="UniProtKB-EC"/>
</dbReference>
<dbReference type="GO" id="GO:0006465">
    <property type="term" value="P:signal peptide processing"/>
    <property type="evidence" value="ECO:0007669"/>
    <property type="project" value="InterPro"/>
</dbReference>
<dbReference type="CDD" id="cd06530">
    <property type="entry name" value="S26_SPase_I"/>
    <property type="match status" value="1"/>
</dbReference>
<dbReference type="Gene3D" id="2.170.230.10">
    <property type="match status" value="1"/>
</dbReference>
<dbReference type="Gene3D" id="2.10.109.10">
    <property type="entry name" value="Umud Fragment, subunit A"/>
    <property type="match status" value="1"/>
</dbReference>
<dbReference type="InterPro" id="IPR036286">
    <property type="entry name" value="LexA/Signal_pep-like_sf"/>
</dbReference>
<dbReference type="InterPro" id="IPR000223">
    <property type="entry name" value="Pept_S26A_signal_pept_1"/>
</dbReference>
<dbReference type="InterPro" id="IPR019758">
    <property type="entry name" value="Pept_S26A_signal_pept_1_CS"/>
</dbReference>
<dbReference type="InterPro" id="IPR019757">
    <property type="entry name" value="Pept_S26A_signal_pept_1_Lys-AS"/>
</dbReference>
<dbReference type="InterPro" id="IPR019756">
    <property type="entry name" value="Pept_S26A_signal_pept_1_Ser-AS"/>
</dbReference>
<dbReference type="InterPro" id="IPR019533">
    <property type="entry name" value="Peptidase_S26"/>
</dbReference>
<dbReference type="InterPro" id="IPR019766">
    <property type="entry name" value="Sign_pep_all-beta_subdom"/>
</dbReference>
<dbReference type="NCBIfam" id="NF008114">
    <property type="entry name" value="PRK10861.1"/>
    <property type="match status" value="1"/>
</dbReference>
<dbReference type="NCBIfam" id="TIGR02227">
    <property type="entry name" value="sigpep_I_bact"/>
    <property type="match status" value="1"/>
</dbReference>
<dbReference type="PANTHER" id="PTHR43390:SF1">
    <property type="entry name" value="CHLOROPLAST PROCESSING PEPTIDASE"/>
    <property type="match status" value="1"/>
</dbReference>
<dbReference type="PANTHER" id="PTHR43390">
    <property type="entry name" value="SIGNAL PEPTIDASE I"/>
    <property type="match status" value="1"/>
</dbReference>
<dbReference type="Pfam" id="PF10502">
    <property type="entry name" value="Peptidase_S26"/>
    <property type="match status" value="1"/>
</dbReference>
<dbReference type="PRINTS" id="PR00727">
    <property type="entry name" value="LEADERPTASE"/>
</dbReference>
<dbReference type="SUPFAM" id="SSF51306">
    <property type="entry name" value="LexA/Signal peptidase"/>
    <property type="match status" value="1"/>
</dbReference>
<dbReference type="PROSITE" id="PS00501">
    <property type="entry name" value="SPASE_I_1"/>
    <property type="match status" value="1"/>
</dbReference>
<dbReference type="PROSITE" id="PS00760">
    <property type="entry name" value="SPASE_I_2"/>
    <property type="match status" value="1"/>
</dbReference>
<dbReference type="PROSITE" id="PS00761">
    <property type="entry name" value="SPASE_I_3"/>
    <property type="match status" value="1"/>
</dbReference>
<comment type="catalytic activity">
    <reaction>
        <text>Cleavage of hydrophobic, N-terminal signal or leader sequences from secreted and periplasmic proteins.</text>
        <dbReference type="EC" id="3.4.21.89"/>
    </reaction>
</comment>
<comment type="subcellular location">
    <subcellularLocation>
        <location evidence="1">Cell membrane</location>
        <topology evidence="1">Multi-pass membrane protein</topology>
    </subcellularLocation>
</comment>
<comment type="similarity">
    <text evidence="3">Belongs to the peptidase S26 family.</text>
</comment>
<reference key="1">
    <citation type="journal article" date="2000" name="Nature">
        <title>Genome sequence of the endocellular bacterial symbiont of aphids Buchnera sp. APS.</title>
        <authorList>
            <person name="Shigenobu S."/>
            <person name="Watanabe H."/>
            <person name="Hattori M."/>
            <person name="Sakaki Y."/>
            <person name="Ishikawa H."/>
        </authorList>
    </citation>
    <scope>NUCLEOTIDE SEQUENCE [LARGE SCALE GENOMIC DNA]</scope>
    <source>
        <strain>APS</strain>
    </source>
</reference>
<protein>
    <recommendedName>
        <fullName>Signal peptidase I</fullName>
        <shortName>SPase I</shortName>
        <ecNumber>3.4.21.89</ecNumber>
    </recommendedName>
    <alternativeName>
        <fullName>Leader peptidase I</fullName>
    </alternativeName>
</protein>
<gene>
    <name type="primary">lepB</name>
    <name type="ordered locus">BU259</name>
</gene>
<keyword id="KW-1003">Cell membrane</keyword>
<keyword id="KW-0378">Hydrolase</keyword>
<keyword id="KW-0472">Membrane</keyword>
<keyword id="KW-0645">Protease</keyword>
<keyword id="KW-1185">Reference proteome</keyword>
<keyword id="KW-0812">Transmembrane</keyword>
<keyword id="KW-1133">Transmembrane helix</keyword>
<name>LEP_BUCAI</name>